<sequence length="177" mass="19012">MSRVANSPVTLPSGVDLTLNGQTVVVKGGKGSLEFNIHTSVQVSKEENVITFAARDGAKQSRALAGTTRALVNNMVVGVSQGFEKRLFLQGVGYRAALKGNVLNLSLGFSHPVDYELPEGVTAECASQTEIVIRGIDKQAVGQVAAEVRGFRPPEPYKGKGVRYSDEVIRRKEAKKK</sequence>
<reference key="1">
    <citation type="submission" date="2007-06" db="EMBL/GenBank/DDBJ databases">
        <title>Complete sequence of Marinomonas sp. MWYL1.</title>
        <authorList>
            <consortium name="US DOE Joint Genome Institute"/>
            <person name="Copeland A."/>
            <person name="Lucas S."/>
            <person name="Lapidus A."/>
            <person name="Barry K."/>
            <person name="Glavina del Rio T."/>
            <person name="Dalin E."/>
            <person name="Tice H."/>
            <person name="Pitluck S."/>
            <person name="Kiss H."/>
            <person name="Brettin T."/>
            <person name="Bruce D."/>
            <person name="Detter J.C."/>
            <person name="Han C."/>
            <person name="Schmutz J."/>
            <person name="Larimer F."/>
            <person name="Land M."/>
            <person name="Hauser L."/>
            <person name="Kyrpides N."/>
            <person name="Kim E."/>
            <person name="Johnston A.W.B."/>
            <person name="Todd J.D."/>
            <person name="Rogers R."/>
            <person name="Wexler M."/>
            <person name="Bond P.L."/>
            <person name="Li Y."/>
            <person name="Richardson P."/>
        </authorList>
    </citation>
    <scope>NUCLEOTIDE SEQUENCE [LARGE SCALE GENOMIC DNA]</scope>
    <source>
        <strain>MWYL1</strain>
    </source>
</reference>
<gene>
    <name evidence="1" type="primary">rplF</name>
    <name type="ordered locus">Mmwyl1_4261</name>
</gene>
<organism>
    <name type="scientific">Marinomonas sp. (strain MWYL1)</name>
    <dbReference type="NCBI Taxonomy" id="400668"/>
    <lineage>
        <taxon>Bacteria</taxon>
        <taxon>Pseudomonadati</taxon>
        <taxon>Pseudomonadota</taxon>
        <taxon>Gammaproteobacteria</taxon>
        <taxon>Oceanospirillales</taxon>
        <taxon>Oceanospirillaceae</taxon>
        <taxon>Marinomonas</taxon>
    </lineage>
</organism>
<keyword id="KW-0687">Ribonucleoprotein</keyword>
<keyword id="KW-0689">Ribosomal protein</keyword>
<keyword id="KW-0694">RNA-binding</keyword>
<keyword id="KW-0699">rRNA-binding</keyword>
<dbReference type="EMBL" id="CP000749">
    <property type="protein sequence ID" value="ABR73156.1"/>
    <property type="molecule type" value="Genomic_DNA"/>
</dbReference>
<dbReference type="SMR" id="A6W377"/>
<dbReference type="STRING" id="400668.Mmwyl1_4261"/>
<dbReference type="KEGG" id="mmw:Mmwyl1_4261"/>
<dbReference type="eggNOG" id="COG0097">
    <property type="taxonomic scope" value="Bacteria"/>
</dbReference>
<dbReference type="HOGENOM" id="CLU_065464_1_2_6"/>
<dbReference type="OrthoDB" id="9805007at2"/>
<dbReference type="GO" id="GO:0022625">
    <property type="term" value="C:cytosolic large ribosomal subunit"/>
    <property type="evidence" value="ECO:0007669"/>
    <property type="project" value="TreeGrafter"/>
</dbReference>
<dbReference type="GO" id="GO:0019843">
    <property type="term" value="F:rRNA binding"/>
    <property type="evidence" value="ECO:0007669"/>
    <property type="project" value="UniProtKB-UniRule"/>
</dbReference>
<dbReference type="GO" id="GO:0003735">
    <property type="term" value="F:structural constituent of ribosome"/>
    <property type="evidence" value="ECO:0007669"/>
    <property type="project" value="InterPro"/>
</dbReference>
<dbReference type="GO" id="GO:0002181">
    <property type="term" value="P:cytoplasmic translation"/>
    <property type="evidence" value="ECO:0007669"/>
    <property type="project" value="TreeGrafter"/>
</dbReference>
<dbReference type="FunFam" id="3.90.930.12:FF:000001">
    <property type="entry name" value="50S ribosomal protein L6"/>
    <property type="match status" value="1"/>
</dbReference>
<dbReference type="FunFam" id="3.90.930.12:FF:000002">
    <property type="entry name" value="50S ribosomal protein L6"/>
    <property type="match status" value="1"/>
</dbReference>
<dbReference type="Gene3D" id="3.90.930.12">
    <property type="entry name" value="Ribosomal protein L6, alpha-beta domain"/>
    <property type="match status" value="2"/>
</dbReference>
<dbReference type="HAMAP" id="MF_01365_B">
    <property type="entry name" value="Ribosomal_uL6_B"/>
    <property type="match status" value="1"/>
</dbReference>
<dbReference type="InterPro" id="IPR000702">
    <property type="entry name" value="Ribosomal_uL6-like"/>
</dbReference>
<dbReference type="InterPro" id="IPR036789">
    <property type="entry name" value="Ribosomal_uL6-like_a/b-dom_sf"/>
</dbReference>
<dbReference type="InterPro" id="IPR020040">
    <property type="entry name" value="Ribosomal_uL6_a/b-dom"/>
</dbReference>
<dbReference type="InterPro" id="IPR019906">
    <property type="entry name" value="Ribosomal_uL6_bac-type"/>
</dbReference>
<dbReference type="InterPro" id="IPR002358">
    <property type="entry name" value="Ribosomal_uL6_CS"/>
</dbReference>
<dbReference type="NCBIfam" id="TIGR03654">
    <property type="entry name" value="L6_bact"/>
    <property type="match status" value="1"/>
</dbReference>
<dbReference type="PANTHER" id="PTHR11655">
    <property type="entry name" value="60S/50S RIBOSOMAL PROTEIN L6/L9"/>
    <property type="match status" value="1"/>
</dbReference>
<dbReference type="PANTHER" id="PTHR11655:SF14">
    <property type="entry name" value="LARGE RIBOSOMAL SUBUNIT PROTEIN UL6M"/>
    <property type="match status" value="1"/>
</dbReference>
<dbReference type="Pfam" id="PF00347">
    <property type="entry name" value="Ribosomal_L6"/>
    <property type="match status" value="2"/>
</dbReference>
<dbReference type="PIRSF" id="PIRSF002162">
    <property type="entry name" value="Ribosomal_L6"/>
    <property type="match status" value="1"/>
</dbReference>
<dbReference type="PRINTS" id="PR00059">
    <property type="entry name" value="RIBOSOMALL6"/>
</dbReference>
<dbReference type="SUPFAM" id="SSF56053">
    <property type="entry name" value="Ribosomal protein L6"/>
    <property type="match status" value="2"/>
</dbReference>
<dbReference type="PROSITE" id="PS00525">
    <property type="entry name" value="RIBOSOMAL_L6_1"/>
    <property type="match status" value="1"/>
</dbReference>
<evidence type="ECO:0000255" key="1">
    <source>
        <dbReference type="HAMAP-Rule" id="MF_01365"/>
    </source>
</evidence>
<evidence type="ECO:0000305" key="2"/>
<proteinExistence type="inferred from homology"/>
<feature type="chain" id="PRO_1000087049" description="Large ribosomal subunit protein uL6">
    <location>
        <begin position="1"/>
        <end position="177"/>
    </location>
</feature>
<accession>A6W377</accession>
<name>RL6_MARMS</name>
<protein>
    <recommendedName>
        <fullName evidence="1">Large ribosomal subunit protein uL6</fullName>
    </recommendedName>
    <alternativeName>
        <fullName evidence="2">50S ribosomal protein L6</fullName>
    </alternativeName>
</protein>
<comment type="function">
    <text evidence="1">This protein binds to the 23S rRNA, and is important in its secondary structure. It is located near the subunit interface in the base of the L7/L12 stalk, and near the tRNA binding site of the peptidyltransferase center.</text>
</comment>
<comment type="subunit">
    <text evidence="1">Part of the 50S ribosomal subunit.</text>
</comment>
<comment type="similarity">
    <text evidence="1">Belongs to the universal ribosomal protein uL6 family.</text>
</comment>